<sequence length="71" mass="8452">MAGMALARAWKQMSWFYYQYLLVTALYMLEPWERTVFNSMLVSVVGMALYTGYVFMPQHIMAILHYFEIVQ</sequence>
<protein>
    <recommendedName>
        <fullName evidence="3">Serine palmitoyltransferase small subunit A</fullName>
    </recommendedName>
    <alternativeName>
        <fullName>Small subunit of serine palmitoyltransferase A</fullName>
        <shortName>ssSPTa</shortName>
    </alternativeName>
</protein>
<name>SPTSA_RAT</name>
<reference key="1">
    <citation type="journal article" date="2004" name="Genome Res.">
        <title>The status, quality, and expansion of the NIH full-length cDNA project: the Mammalian Gene Collection (MGC).</title>
        <authorList>
            <consortium name="The MGC Project Team"/>
        </authorList>
    </citation>
    <scope>NUCLEOTIDE SEQUENCE [LARGE SCALE MRNA]</scope>
    <source>
        <tissue>Spleen</tissue>
    </source>
</reference>
<dbReference type="EMBL" id="BC098829">
    <property type="protein sequence ID" value="AAH98829.1"/>
    <property type="status" value="ALT_INIT"/>
    <property type="molecule type" value="mRNA"/>
</dbReference>
<dbReference type="RefSeq" id="NP_001041208.1">
    <property type="nucleotide sequence ID" value="NM_001047743.1"/>
</dbReference>
<dbReference type="SMR" id="Q4G019"/>
<dbReference type="FunCoup" id="Q4G019">
    <property type="interactions" value="64"/>
</dbReference>
<dbReference type="STRING" id="10116.ENSRNOP00000005825"/>
<dbReference type="PaxDb" id="10116-ENSRNOP00000005825"/>
<dbReference type="Ensembl" id="ENSRNOT00000005825.7">
    <property type="protein sequence ID" value="ENSRNOP00000005825.3"/>
    <property type="gene ID" value="ENSRNOG00000004292.7"/>
</dbReference>
<dbReference type="GeneID" id="500651"/>
<dbReference type="KEGG" id="rno:500651"/>
<dbReference type="UCSC" id="RGD:1565821">
    <property type="organism name" value="rat"/>
</dbReference>
<dbReference type="AGR" id="RGD:1565821"/>
<dbReference type="CTD" id="171546"/>
<dbReference type="RGD" id="1565821">
    <property type="gene designation" value="Sptssa"/>
</dbReference>
<dbReference type="eggNOG" id="ENOG502S4Q3">
    <property type="taxonomic scope" value="Eukaryota"/>
</dbReference>
<dbReference type="GeneTree" id="ENSGT00390000002766"/>
<dbReference type="HOGENOM" id="CLU_187811_1_0_1"/>
<dbReference type="InParanoid" id="Q4G019"/>
<dbReference type="OMA" id="LEPVERW"/>
<dbReference type="OrthoDB" id="202672at2759"/>
<dbReference type="PhylomeDB" id="Q4G019"/>
<dbReference type="TreeFam" id="TF328418"/>
<dbReference type="Reactome" id="R-RNO-1660661">
    <property type="pathway name" value="Sphingolipid de novo biosynthesis"/>
</dbReference>
<dbReference type="UniPathway" id="UPA00222"/>
<dbReference type="PRO" id="PR:Q4G019"/>
<dbReference type="Proteomes" id="UP000002494">
    <property type="component" value="Chromosome 6"/>
</dbReference>
<dbReference type="Bgee" id="ENSRNOG00000004292">
    <property type="expression patterns" value="Expressed in thymus and 20 other cell types or tissues"/>
</dbReference>
<dbReference type="GO" id="GO:0005783">
    <property type="term" value="C:endoplasmic reticulum"/>
    <property type="evidence" value="ECO:0000250"/>
    <property type="project" value="UniProtKB"/>
</dbReference>
<dbReference type="GO" id="GO:0005789">
    <property type="term" value="C:endoplasmic reticulum membrane"/>
    <property type="evidence" value="ECO:0007669"/>
    <property type="project" value="UniProtKB-SubCell"/>
</dbReference>
<dbReference type="GO" id="GO:0017059">
    <property type="term" value="C:serine palmitoyltransferase complex"/>
    <property type="evidence" value="ECO:0000250"/>
    <property type="project" value="UniProtKB"/>
</dbReference>
<dbReference type="GO" id="GO:0004758">
    <property type="term" value="F:serine C-palmitoyltransferase activity"/>
    <property type="evidence" value="ECO:0000266"/>
    <property type="project" value="RGD"/>
</dbReference>
<dbReference type="GO" id="GO:0046513">
    <property type="term" value="P:ceramide biosynthetic process"/>
    <property type="evidence" value="ECO:0000266"/>
    <property type="project" value="RGD"/>
</dbReference>
<dbReference type="GO" id="GO:0008104">
    <property type="term" value="P:protein localization"/>
    <property type="evidence" value="ECO:0000250"/>
    <property type="project" value="UniProtKB"/>
</dbReference>
<dbReference type="GO" id="GO:0046512">
    <property type="term" value="P:sphingosine biosynthetic process"/>
    <property type="evidence" value="ECO:0000266"/>
    <property type="project" value="RGD"/>
</dbReference>
<dbReference type="InterPro" id="IPR024512">
    <property type="entry name" value="Ser_palmitoyltrfase_ssu-like"/>
</dbReference>
<dbReference type="InterPro" id="IPR051900">
    <property type="entry name" value="SPT_small_subunit"/>
</dbReference>
<dbReference type="PANTHER" id="PTHR47084">
    <property type="entry name" value="SERINE PALMITOYLTRANSFERASE SMALL SUBUNIT A"/>
    <property type="match status" value="1"/>
</dbReference>
<dbReference type="PANTHER" id="PTHR47084:SF1">
    <property type="entry name" value="SERINE PALMITOYLTRANSFERASE SMALL SUBUNIT A"/>
    <property type="match status" value="1"/>
</dbReference>
<dbReference type="Pfam" id="PF11779">
    <property type="entry name" value="SPT_ssu-like"/>
    <property type="match status" value="1"/>
</dbReference>
<feature type="chain" id="PRO_0000293704" description="Serine palmitoyltransferase small subunit A">
    <location>
        <begin position="1"/>
        <end position="71"/>
    </location>
</feature>
<feature type="topological domain" description="Cytoplasmic" evidence="2">
    <location>
        <begin position="1"/>
        <end position="12"/>
    </location>
</feature>
<feature type="transmembrane region" description="Helical" evidence="2">
    <location>
        <begin position="13"/>
        <end position="29"/>
    </location>
</feature>
<feature type="topological domain" description="Lumenal" evidence="2">
    <location>
        <begin position="30"/>
        <end position="34"/>
    </location>
</feature>
<feature type="transmembrane region" description="Helical" evidence="2">
    <location>
        <begin position="35"/>
        <end position="57"/>
    </location>
</feature>
<feature type="topological domain" description="Cytoplasmic" evidence="2">
    <location>
        <begin position="58"/>
        <end position="71"/>
    </location>
</feature>
<feature type="site" description="Within the serine palmitoyltransferase (SPT) complex, defines the length of the acyl chain-binding pocket, determining the acyl-CoA substrate preference" evidence="1">
    <location>
        <position position="28"/>
    </location>
</feature>
<comment type="function">
    <text evidence="1">Component of the serine palmitoyltransferase multisubunit enzyme (SPT) that catalyzes the initial and rate-limiting step in sphingolipid biosynthesis by condensing L-serine and activated acyl-CoA (most commonly palmitoyl-CoA) to form long-chain bases. The SPT complex is composed of SPTLC1, SPTLC2 or SPTLC3 and SPTSSA or SPTSSB. Within this complex, the heterodimer consisting of SPTLC1 and SPTLC2/SPTLC3 forms the catalytic core. Within the SPT complex, SPTSSA stimulates the catalytic activity and plays a role in substrate specificity, which depends upon the overall complex composition. The SPTLC1-SPTLC2-SPTSSA complex shows a strong preference for C16-CoA substrate, while the SPTLC1-SPTLC3-SPTSSA isozyme uses both C14-CoA and C16-CoA as substrates, with a slight preference for C14-CoA. Independently of its action as a SPT component, may be involved in MBOAT7 localization to mitochondria-associated membranes, a membrane bridge between the endoplasmic reticulum and mitochondria, may hence affect MBOAT7-catalyzed incorporation of arachidonic acid into phosphatidylinositol.</text>
</comment>
<comment type="pathway">
    <text>Lipid metabolism; sphingolipid metabolism.</text>
</comment>
<comment type="subunit">
    <text evidence="1">Component of the serine palmitoyltransferase (SPT) complex, which is composed of SPTLC1, SPTLC2 or SPTLC3 and SPTSSA or SPTSSB. The heterodimer consisting of SPTLC1 and SPTLC2/SPTLC3 forms the catalytic core of the enzyme, while SPTSSA or SPTSSB subunits determine substrate specificity. SPT also interacts with ORMDL proteins, especially ORMDL3, which negatively regulate SPT activity in the presence of ceramides. Interacts with MBOAT7; the interaction plays a role in MBOAT7 localization to mitochondria-associated membranes.</text>
</comment>
<comment type="subcellular location">
    <subcellularLocation>
        <location evidence="3">Endoplasmic reticulum membrane</location>
        <topology evidence="3">Multi-pass membrane protein</topology>
    </subcellularLocation>
</comment>
<comment type="similarity">
    <text evidence="3">Belongs to the SPTSS family. SPTSSA subfamily.</text>
</comment>
<comment type="caution">
    <text evidence="3">It is uncertain whether Met-1 or Met-4 is the initiator.</text>
</comment>
<comment type="sequence caution" evidence="3">
    <conflict type="erroneous initiation">
        <sequence resource="EMBL-CDS" id="AAH98829"/>
    </conflict>
    <text>Truncated N-terminus.</text>
</comment>
<organism>
    <name type="scientific">Rattus norvegicus</name>
    <name type="common">Rat</name>
    <dbReference type="NCBI Taxonomy" id="10116"/>
    <lineage>
        <taxon>Eukaryota</taxon>
        <taxon>Metazoa</taxon>
        <taxon>Chordata</taxon>
        <taxon>Craniata</taxon>
        <taxon>Vertebrata</taxon>
        <taxon>Euteleostomi</taxon>
        <taxon>Mammalia</taxon>
        <taxon>Eutheria</taxon>
        <taxon>Euarchontoglires</taxon>
        <taxon>Glires</taxon>
        <taxon>Rodentia</taxon>
        <taxon>Myomorpha</taxon>
        <taxon>Muroidea</taxon>
        <taxon>Muridae</taxon>
        <taxon>Murinae</taxon>
        <taxon>Rattus</taxon>
    </lineage>
</organism>
<evidence type="ECO:0000250" key="1">
    <source>
        <dbReference type="UniProtKB" id="Q969W0"/>
    </source>
</evidence>
<evidence type="ECO:0000255" key="2"/>
<evidence type="ECO:0000305" key="3"/>
<evidence type="ECO:0000312" key="4">
    <source>
        <dbReference type="RGD" id="1565821"/>
    </source>
</evidence>
<proteinExistence type="inferred from homology"/>
<gene>
    <name evidence="4" type="primary">Sptssa</name>
    <name type="synonym">Ssspta</name>
</gene>
<accession>Q4G019</accession>
<keyword id="KW-0256">Endoplasmic reticulum</keyword>
<keyword id="KW-0443">Lipid metabolism</keyword>
<keyword id="KW-0472">Membrane</keyword>
<keyword id="KW-1185">Reference proteome</keyword>
<keyword id="KW-0746">Sphingolipid metabolism</keyword>
<keyword id="KW-0812">Transmembrane</keyword>
<keyword id="KW-1133">Transmembrane helix</keyword>